<dbReference type="EMBL" id="AC004006">
    <property type="status" value="NOT_ANNOTATED_CDS"/>
    <property type="molecule type" value="Genomic_DNA"/>
</dbReference>
<dbReference type="EMBL" id="AC004082">
    <property type="protein sequence ID" value="AAB97937.1"/>
    <property type="status" value="ALT_SEQ"/>
    <property type="molecule type" value="Genomic_DNA"/>
</dbReference>
<dbReference type="EMBL" id="AC080093">
    <property type="status" value="NOT_ANNOTATED_CDS"/>
    <property type="molecule type" value="Genomic_DNA"/>
</dbReference>
<dbReference type="EMBL" id="AC004886">
    <property type="protein sequence ID" value="AAD21789.2"/>
    <property type="status" value="ALT_SEQ"/>
    <property type="molecule type" value="Genomic_DNA"/>
</dbReference>
<dbReference type="EMBL" id="AC004903">
    <property type="status" value="NOT_ANNOTATED_CDS"/>
    <property type="molecule type" value="Genomic_DNA"/>
</dbReference>
<dbReference type="EMBL" id="AC093461">
    <property type="status" value="NOT_ANNOTATED_CDS"/>
    <property type="molecule type" value="Genomic_DNA"/>
</dbReference>
<dbReference type="EMBL" id="CH236949">
    <property type="protein sequence ID" value="EAL24187.1"/>
    <property type="status" value="ALT_SEQ"/>
    <property type="molecule type" value="Genomic_DNA"/>
</dbReference>
<dbReference type="EMBL" id="BC001304">
    <property type="protein sequence ID" value="AAH01304.2"/>
    <property type="molecule type" value="mRNA"/>
</dbReference>
<dbReference type="EMBL" id="BC122565">
    <property type="protein sequence ID" value="AAI22566.1"/>
    <property type="molecule type" value="mRNA"/>
</dbReference>
<dbReference type="EMBL" id="BC125271">
    <property type="protein sequence ID" value="AAI25272.1"/>
    <property type="molecule type" value="mRNA"/>
</dbReference>
<dbReference type="EMBL" id="Y19188">
    <property type="protein sequence ID" value="CAB60727.1"/>
    <property type="molecule type" value="mRNA"/>
</dbReference>
<dbReference type="EMBL" id="AB011131">
    <property type="protein sequence ID" value="BAA25485.1"/>
    <property type="molecule type" value="mRNA"/>
</dbReference>
<dbReference type="CCDS" id="CCDS47630.1">
    <molecule id="Q9Y6V0-5"/>
</dbReference>
<dbReference type="CCDS" id="CCDS47631.1">
    <molecule id="Q9Y6V0-6"/>
</dbReference>
<dbReference type="PIR" id="T00332">
    <property type="entry name" value="T00332"/>
</dbReference>
<dbReference type="PIR" id="T00634">
    <property type="entry name" value="T00634"/>
</dbReference>
<dbReference type="RefSeq" id="NP_055325.2">
    <molecule id="Q9Y6V0-6"/>
    <property type="nucleotide sequence ID" value="NM_014510.2"/>
</dbReference>
<dbReference type="RefSeq" id="NP_149015.2">
    <molecule id="Q9Y6V0-5"/>
    <property type="nucleotide sequence ID" value="NM_033026.6"/>
</dbReference>
<dbReference type="PDB" id="1UJD">
    <property type="method" value="NMR"/>
    <property type="chains" value="A=4489-4592"/>
</dbReference>
<dbReference type="PDBsum" id="1UJD"/>
<dbReference type="SMR" id="Q9Y6V0"/>
<dbReference type="BioGRID" id="118178">
    <property type="interactions" value="57"/>
</dbReference>
<dbReference type="ELM" id="Q9Y6V0"/>
<dbReference type="FunCoup" id="Q9Y6V0">
    <property type="interactions" value="374"/>
</dbReference>
<dbReference type="IntAct" id="Q9Y6V0">
    <property type="interactions" value="17"/>
</dbReference>
<dbReference type="MINT" id="Q9Y6V0"/>
<dbReference type="STRING" id="9606.ENSP00000334319"/>
<dbReference type="GlyCosmos" id="Q9Y6V0">
    <property type="glycosylation" value="62 sites, 1 glycan"/>
</dbReference>
<dbReference type="GlyGen" id="Q9Y6V0">
    <property type="glycosylation" value="47 sites, 1 O-linked glycan (38 sites)"/>
</dbReference>
<dbReference type="iPTMnet" id="Q9Y6V0"/>
<dbReference type="PhosphoSitePlus" id="Q9Y6V0"/>
<dbReference type="SwissPalm" id="Q9Y6V0"/>
<dbReference type="BioMuta" id="PCLO"/>
<dbReference type="DMDM" id="332278245"/>
<dbReference type="jPOST" id="Q9Y6V0"/>
<dbReference type="MassIVE" id="Q9Y6V0"/>
<dbReference type="PaxDb" id="9606-ENSP00000334319"/>
<dbReference type="PeptideAtlas" id="Q9Y6V0"/>
<dbReference type="ProteomicsDB" id="86795">
    <molecule id="Q9Y6V0-3"/>
</dbReference>
<dbReference type="ProteomicsDB" id="86797">
    <molecule id="Q9Y6V0-5"/>
</dbReference>
<dbReference type="ProteomicsDB" id="86798">
    <molecule id="Q9Y6V0-6"/>
</dbReference>
<dbReference type="Antibodypedia" id="2812">
    <property type="antibodies" value="258 antibodies from 23 providers"/>
</dbReference>
<dbReference type="DNASU" id="27445"/>
<dbReference type="Ensembl" id="ENST00000333891.14">
    <molecule id="Q9Y6V0-5"/>
    <property type="protein sequence ID" value="ENSP00000334319.8"/>
    <property type="gene ID" value="ENSG00000186472.20"/>
</dbReference>
<dbReference type="Ensembl" id="ENST00000423517.6">
    <molecule id="Q9Y6V0-6"/>
    <property type="protein sequence ID" value="ENSP00000388393.2"/>
    <property type="gene ID" value="ENSG00000186472.20"/>
</dbReference>
<dbReference type="Ensembl" id="ENST00000618073.1">
    <molecule id="Q9Y6V0-3"/>
    <property type="protein sequence ID" value="ENSP00000482390.1"/>
    <property type="gene ID" value="ENSG00000186472.20"/>
</dbReference>
<dbReference type="GeneID" id="27445"/>
<dbReference type="KEGG" id="hsa:27445"/>
<dbReference type="MANE-Select" id="ENST00000333891.14">
    <property type="protein sequence ID" value="ENSP00000334319.8"/>
    <property type="RefSeq nucleotide sequence ID" value="NM_033026.6"/>
    <property type="RefSeq protein sequence ID" value="NP_149015.2"/>
</dbReference>
<dbReference type="UCSC" id="uc003uhv.3">
    <molecule id="Q9Y6V0-5"/>
    <property type="organism name" value="human"/>
</dbReference>
<dbReference type="AGR" id="HGNC:13406"/>
<dbReference type="CTD" id="27445"/>
<dbReference type="DisGeNET" id="27445"/>
<dbReference type="GeneCards" id="PCLO"/>
<dbReference type="HGNC" id="HGNC:13406">
    <property type="gene designation" value="PCLO"/>
</dbReference>
<dbReference type="HPA" id="ENSG00000186472">
    <property type="expression patterns" value="Group enriched (brain, pituitary gland, retina)"/>
</dbReference>
<dbReference type="MalaCards" id="PCLO"/>
<dbReference type="MIM" id="604918">
    <property type="type" value="gene"/>
</dbReference>
<dbReference type="MIM" id="608027">
    <property type="type" value="phenotype"/>
</dbReference>
<dbReference type="neXtProt" id="NX_Q9Y6V0"/>
<dbReference type="OpenTargets" id="ENSG00000186472"/>
<dbReference type="Orphanet" id="97249">
    <property type="disease" value="Pontocerebellar hypoplasia type 3"/>
</dbReference>
<dbReference type="PharmGKB" id="PA33072"/>
<dbReference type="VEuPathDB" id="HostDB:ENSG00000186472"/>
<dbReference type="eggNOG" id="KOG2060">
    <property type="taxonomic scope" value="Eukaryota"/>
</dbReference>
<dbReference type="GeneTree" id="ENSGT00620000087961"/>
<dbReference type="HOGENOM" id="CLU_000104_0_1_1"/>
<dbReference type="InParanoid" id="Q9Y6V0"/>
<dbReference type="OMA" id="KVTTDHK"/>
<dbReference type="OrthoDB" id="67700at2759"/>
<dbReference type="PAN-GO" id="Q9Y6V0">
    <property type="GO annotations" value="7 GO annotations based on evolutionary models"/>
</dbReference>
<dbReference type="TreeFam" id="TF326082"/>
<dbReference type="PathwayCommons" id="Q9Y6V0"/>
<dbReference type="Reactome" id="R-HSA-9662360">
    <property type="pathway name" value="Sensory processing of sound by inner hair cells of the cochlea"/>
</dbReference>
<dbReference type="SignaLink" id="Q9Y6V0"/>
<dbReference type="BioGRID-ORCS" id="27445">
    <property type="hits" value="7 hits in 1140 CRISPR screens"/>
</dbReference>
<dbReference type="CD-CODE" id="FB4E32DD">
    <property type="entry name" value="Presynaptic clusters and postsynaptic densities"/>
</dbReference>
<dbReference type="ChiTaRS" id="PCLO">
    <property type="organism name" value="human"/>
</dbReference>
<dbReference type="EvolutionaryTrace" id="Q9Y6V0"/>
<dbReference type="GeneWiki" id="PCLO"/>
<dbReference type="GenomeRNAi" id="27445"/>
<dbReference type="Pharos" id="Q9Y6V0">
    <property type="development level" value="Tbio"/>
</dbReference>
<dbReference type="PRO" id="PR:Q9Y6V0"/>
<dbReference type="Proteomes" id="UP000005640">
    <property type="component" value="Chromosome 7"/>
</dbReference>
<dbReference type="RNAct" id="Q9Y6V0">
    <property type="molecule type" value="protein"/>
</dbReference>
<dbReference type="Bgee" id="ENSG00000186472">
    <property type="expression patterns" value="Expressed in Brodmann (1909) area 23 and 164 other cell types or tissues"/>
</dbReference>
<dbReference type="ExpressionAtlas" id="Q9Y6V0">
    <property type="expression patterns" value="baseline and differential"/>
</dbReference>
<dbReference type="GO" id="GO:0030424">
    <property type="term" value="C:axon"/>
    <property type="evidence" value="ECO:0000318"/>
    <property type="project" value="GO_Central"/>
</dbReference>
<dbReference type="GO" id="GO:0005856">
    <property type="term" value="C:cytoskeleton"/>
    <property type="evidence" value="ECO:0000303"/>
    <property type="project" value="UniProtKB"/>
</dbReference>
<dbReference type="GO" id="GO:0048788">
    <property type="term" value="C:cytoskeleton of presynaptic active zone"/>
    <property type="evidence" value="ECO:0000318"/>
    <property type="project" value="GO_Central"/>
</dbReference>
<dbReference type="GO" id="GO:0070062">
    <property type="term" value="C:extracellular exosome"/>
    <property type="evidence" value="ECO:0007005"/>
    <property type="project" value="UniProtKB"/>
</dbReference>
<dbReference type="GO" id="GO:0098982">
    <property type="term" value="C:GABA-ergic synapse"/>
    <property type="evidence" value="ECO:0000318"/>
    <property type="project" value="GO_Central"/>
</dbReference>
<dbReference type="GO" id="GO:0098978">
    <property type="term" value="C:glutamatergic synapse"/>
    <property type="evidence" value="ECO:0000318"/>
    <property type="project" value="GO_Central"/>
</dbReference>
<dbReference type="GO" id="GO:0014069">
    <property type="term" value="C:postsynaptic density"/>
    <property type="evidence" value="ECO:0007669"/>
    <property type="project" value="Ensembl"/>
</dbReference>
<dbReference type="GO" id="GO:0045202">
    <property type="term" value="C:synapse"/>
    <property type="evidence" value="ECO:0000250"/>
    <property type="project" value="UniProtKB"/>
</dbReference>
<dbReference type="GO" id="GO:0005509">
    <property type="term" value="F:calcium ion binding"/>
    <property type="evidence" value="ECO:0000250"/>
    <property type="project" value="UniProtKB"/>
</dbReference>
<dbReference type="GO" id="GO:0005544">
    <property type="term" value="F:calcium-dependent phospholipid binding"/>
    <property type="evidence" value="ECO:0000250"/>
    <property type="project" value="UniProtKB"/>
</dbReference>
<dbReference type="GO" id="GO:0005522">
    <property type="term" value="F:profilin binding"/>
    <property type="evidence" value="ECO:0000250"/>
    <property type="project" value="UniProtKB"/>
</dbReference>
<dbReference type="GO" id="GO:0098882">
    <property type="term" value="F:structural constituent of presynaptic active zone"/>
    <property type="evidence" value="ECO:0000318"/>
    <property type="project" value="GO_Central"/>
</dbReference>
<dbReference type="GO" id="GO:0008270">
    <property type="term" value="F:zinc ion binding"/>
    <property type="evidence" value="ECO:0007669"/>
    <property type="project" value="UniProtKB-KW"/>
</dbReference>
<dbReference type="GO" id="GO:0007010">
    <property type="term" value="P:cytoskeleton organization"/>
    <property type="evidence" value="ECO:0000250"/>
    <property type="project" value="UniProtKB"/>
</dbReference>
<dbReference type="GO" id="GO:0030073">
    <property type="term" value="P:insulin secretion"/>
    <property type="evidence" value="ECO:0007669"/>
    <property type="project" value="Ensembl"/>
</dbReference>
<dbReference type="GO" id="GO:0099140">
    <property type="term" value="P:presynaptic actin cytoskeleton organization"/>
    <property type="evidence" value="ECO:0007669"/>
    <property type="project" value="Ensembl"/>
</dbReference>
<dbReference type="GO" id="GO:1904071">
    <property type="term" value="P:presynaptic active zone assembly"/>
    <property type="evidence" value="ECO:0000318"/>
    <property type="project" value="GO_Central"/>
</dbReference>
<dbReference type="GO" id="GO:0035418">
    <property type="term" value="P:protein localization to synapse"/>
    <property type="evidence" value="ECO:0000318"/>
    <property type="project" value="GO_Central"/>
</dbReference>
<dbReference type="GO" id="GO:0017157">
    <property type="term" value="P:regulation of exocytosis"/>
    <property type="evidence" value="ECO:0007669"/>
    <property type="project" value="Ensembl"/>
</dbReference>
<dbReference type="GO" id="GO:0097091">
    <property type="term" value="P:synaptic vesicle clustering"/>
    <property type="evidence" value="ECO:0007669"/>
    <property type="project" value="Ensembl"/>
</dbReference>
<dbReference type="GO" id="GO:0016079">
    <property type="term" value="P:synaptic vesicle exocytosis"/>
    <property type="evidence" value="ECO:0000303"/>
    <property type="project" value="UniProtKB"/>
</dbReference>
<dbReference type="CDD" id="cd04031">
    <property type="entry name" value="C2A_RIM1alpha"/>
    <property type="match status" value="1"/>
</dbReference>
<dbReference type="CDD" id="cd15774">
    <property type="entry name" value="FYVE1_PCLO"/>
    <property type="match status" value="1"/>
</dbReference>
<dbReference type="CDD" id="cd15776">
    <property type="entry name" value="FYVE2_PCLO"/>
    <property type="match status" value="1"/>
</dbReference>
<dbReference type="CDD" id="cd06714">
    <property type="entry name" value="PDZ_RIM-like"/>
    <property type="match status" value="1"/>
</dbReference>
<dbReference type="FunFam" id="3.30.40.10:FF:000326">
    <property type="entry name" value="Bassoon presynaptic cytomatrix protein"/>
    <property type="match status" value="1"/>
</dbReference>
<dbReference type="FunFam" id="2.30.42.10:FF:000126">
    <property type="entry name" value="Piccolo presynaptic cytomatrix protein"/>
    <property type="match status" value="1"/>
</dbReference>
<dbReference type="FunFam" id="2.60.40.150:FF:000137">
    <property type="entry name" value="Piccolo presynaptic cytomatrix protein"/>
    <property type="match status" value="1"/>
</dbReference>
<dbReference type="FunFam" id="2.60.40.150:FF:000149">
    <property type="entry name" value="Piccolo presynaptic cytomatrix protein"/>
    <property type="match status" value="1"/>
</dbReference>
<dbReference type="FunFam" id="3.30.40.10:FF:000563">
    <property type="entry name" value="Piccolo presynaptic cytomatrix protein"/>
    <property type="match status" value="1"/>
</dbReference>
<dbReference type="Gene3D" id="2.30.42.10">
    <property type="match status" value="1"/>
</dbReference>
<dbReference type="Gene3D" id="2.60.40.150">
    <property type="entry name" value="C2 domain"/>
    <property type="match status" value="2"/>
</dbReference>
<dbReference type="Gene3D" id="3.30.40.10">
    <property type="entry name" value="Zinc/RING finger domain, C3HC4 (zinc finger)"/>
    <property type="match status" value="2"/>
</dbReference>
<dbReference type="InterPro" id="IPR000008">
    <property type="entry name" value="C2_dom"/>
</dbReference>
<dbReference type="InterPro" id="IPR035892">
    <property type="entry name" value="C2_domain_sf"/>
</dbReference>
<dbReference type="InterPro" id="IPR042720">
    <property type="entry name" value="PCLO_FYVE1"/>
</dbReference>
<dbReference type="InterPro" id="IPR001478">
    <property type="entry name" value="PDZ"/>
</dbReference>
<dbReference type="InterPro" id="IPR036034">
    <property type="entry name" value="PDZ_sf"/>
</dbReference>
<dbReference type="InterPro" id="IPR052098">
    <property type="entry name" value="Presynaptic_Scaffold_Bsn/Pclo"/>
</dbReference>
<dbReference type="InterPro" id="IPR011011">
    <property type="entry name" value="Znf_FYVE_PHD"/>
</dbReference>
<dbReference type="InterPro" id="IPR008899">
    <property type="entry name" value="Znf_piccolo"/>
</dbReference>
<dbReference type="InterPro" id="IPR013083">
    <property type="entry name" value="Znf_RING/FYVE/PHD"/>
</dbReference>
<dbReference type="PANTHER" id="PTHR14113">
    <property type="entry name" value="PICCOLO/BASSOON"/>
    <property type="match status" value="1"/>
</dbReference>
<dbReference type="PANTHER" id="PTHR14113:SF6">
    <property type="entry name" value="PROTEIN PICCOLO"/>
    <property type="match status" value="1"/>
</dbReference>
<dbReference type="Pfam" id="PF00168">
    <property type="entry name" value="C2"/>
    <property type="match status" value="2"/>
</dbReference>
<dbReference type="Pfam" id="PF00595">
    <property type="entry name" value="PDZ"/>
    <property type="match status" value="1"/>
</dbReference>
<dbReference type="Pfam" id="PF05715">
    <property type="entry name" value="zf-piccolo"/>
    <property type="match status" value="2"/>
</dbReference>
<dbReference type="SMART" id="SM00239">
    <property type="entry name" value="C2"/>
    <property type="match status" value="2"/>
</dbReference>
<dbReference type="SMART" id="SM00228">
    <property type="entry name" value="PDZ"/>
    <property type="match status" value="1"/>
</dbReference>
<dbReference type="SUPFAM" id="SSF49562">
    <property type="entry name" value="C2 domain (Calcium/lipid-binding domain, CaLB)"/>
    <property type="match status" value="2"/>
</dbReference>
<dbReference type="SUPFAM" id="SSF57903">
    <property type="entry name" value="FYVE/PHD zinc finger"/>
    <property type="match status" value="2"/>
</dbReference>
<dbReference type="SUPFAM" id="SSF50156">
    <property type="entry name" value="PDZ domain-like"/>
    <property type="match status" value="1"/>
</dbReference>
<dbReference type="PROSITE" id="PS50004">
    <property type="entry name" value="C2"/>
    <property type="match status" value="2"/>
</dbReference>
<dbReference type="PROSITE" id="PS50106">
    <property type="entry name" value="PDZ"/>
    <property type="match status" value="1"/>
</dbReference>
<evidence type="ECO:0000250" key="1">
    <source>
        <dbReference type="UniProtKB" id="Q9JKS6"/>
    </source>
</evidence>
<evidence type="ECO:0000250" key="2">
    <source>
        <dbReference type="UniProtKB" id="Q9QYX7"/>
    </source>
</evidence>
<evidence type="ECO:0000255" key="3"/>
<evidence type="ECO:0000255" key="4">
    <source>
        <dbReference type="PROSITE-ProRule" id="PRU00041"/>
    </source>
</evidence>
<evidence type="ECO:0000256" key="5">
    <source>
        <dbReference type="SAM" id="MobiDB-lite"/>
    </source>
</evidence>
<evidence type="ECO:0000269" key="6">
    <source>
    </source>
</evidence>
<evidence type="ECO:0000303" key="7">
    <source>
    </source>
</evidence>
<evidence type="ECO:0000305" key="8"/>
<evidence type="ECO:0000312" key="9">
    <source>
        <dbReference type="EMBL" id="CAB60727.1"/>
    </source>
</evidence>
<evidence type="ECO:0007829" key="10">
    <source>
        <dbReference type="PDB" id="1UJD"/>
    </source>
</evidence>
<reference key="1">
    <citation type="journal article" date="2003" name="Nature">
        <title>The DNA sequence of human chromosome 7.</title>
        <authorList>
            <person name="Hillier L.W."/>
            <person name="Fulton R.S."/>
            <person name="Fulton L.A."/>
            <person name="Graves T.A."/>
            <person name="Pepin K.H."/>
            <person name="Wagner-McPherson C."/>
            <person name="Layman D."/>
            <person name="Maas J."/>
            <person name="Jaeger S."/>
            <person name="Walker R."/>
            <person name="Wylie K."/>
            <person name="Sekhon M."/>
            <person name="Becker M.C."/>
            <person name="O'Laughlin M.D."/>
            <person name="Schaller M.E."/>
            <person name="Fewell G.A."/>
            <person name="Delehaunty K.D."/>
            <person name="Miner T.L."/>
            <person name="Nash W.E."/>
            <person name="Cordes M."/>
            <person name="Du H."/>
            <person name="Sun H."/>
            <person name="Edwards J."/>
            <person name="Bradshaw-Cordum H."/>
            <person name="Ali J."/>
            <person name="Andrews S."/>
            <person name="Isak A."/>
            <person name="Vanbrunt A."/>
            <person name="Nguyen C."/>
            <person name="Du F."/>
            <person name="Lamar B."/>
            <person name="Courtney L."/>
            <person name="Kalicki J."/>
            <person name="Ozersky P."/>
            <person name="Bielicki L."/>
            <person name="Scott K."/>
            <person name="Holmes A."/>
            <person name="Harkins R."/>
            <person name="Harris A."/>
            <person name="Strong C.M."/>
            <person name="Hou S."/>
            <person name="Tomlinson C."/>
            <person name="Dauphin-Kohlberg S."/>
            <person name="Kozlowicz-Reilly A."/>
            <person name="Leonard S."/>
            <person name="Rohlfing T."/>
            <person name="Rock S.M."/>
            <person name="Tin-Wollam A.-M."/>
            <person name="Abbott A."/>
            <person name="Minx P."/>
            <person name="Maupin R."/>
            <person name="Strowmatt C."/>
            <person name="Latreille P."/>
            <person name="Miller N."/>
            <person name="Johnson D."/>
            <person name="Murray J."/>
            <person name="Woessner J.P."/>
            <person name="Wendl M.C."/>
            <person name="Yang S.-P."/>
            <person name="Schultz B.R."/>
            <person name="Wallis J.W."/>
            <person name="Spieth J."/>
            <person name="Bieri T.A."/>
            <person name="Nelson J.O."/>
            <person name="Berkowicz N."/>
            <person name="Wohldmann P.E."/>
            <person name="Cook L.L."/>
            <person name="Hickenbotham M.T."/>
            <person name="Eldred J."/>
            <person name="Williams D."/>
            <person name="Bedell J.A."/>
            <person name="Mardis E.R."/>
            <person name="Clifton S.W."/>
            <person name="Chissoe S.L."/>
            <person name="Marra M.A."/>
            <person name="Raymond C."/>
            <person name="Haugen E."/>
            <person name="Gillett W."/>
            <person name="Zhou Y."/>
            <person name="James R."/>
            <person name="Phelps K."/>
            <person name="Iadanoto S."/>
            <person name="Bubb K."/>
            <person name="Simms E."/>
            <person name="Levy R."/>
            <person name="Clendenning J."/>
            <person name="Kaul R."/>
            <person name="Kent W.J."/>
            <person name="Furey T.S."/>
            <person name="Baertsch R.A."/>
            <person name="Brent M.R."/>
            <person name="Keibler E."/>
            <person name="Flicek P."/>
            <person name="Bork P."/>
            <person name="Suyama M."/>
            <person name="Bailey J.A."/>
            <person name="Portnoy M.E."/>
            <person name="Torrents D."/>
            <person name="Chinwalla A.T."/>
            <person name="Gish W.R."/>
            <person name="Eddy S.R."/>
            <person name="McPherson J.D."/>
            <person name="Olson M.V."/>
            <person name="Eichler E.E."/>
            <person name="Green E.D."/>
            <person name="Waterston R.H."/>
            <person name="Wilson R.K."/>
        </authorList>
    </citation>
    <scope>NUCLEOTIDE SEQUENCE [LARGE SCALE GENOMIC DNA]</scope>
</reference>
<reference evidence="8" key="2">
    <citation type="submission" date="2004-06" db="EMBL/GenBank/DDBJ databases">
        <authorList>
            <person name="Mural R.J."/>
            <person name="Istrail S."/>
            <person name="Sutton G.G."/>
            <person name="Florea L."/>
            <person name="Halpern A.L."/>
            <person name="Mobarry C.M."/>
            <person name="Lippert R."/>
            <person name="Walenz B."/>
            <person name="Shatkay H."/>
            <person name="Dew I."/>
            <person name="Miller J.R."/>
            <person name="Flanigan M.J."/>
            <person name="Edwards N.J."/>
            <person name="Bolanos R."/>
            <person name="Fasulo D."/>
            <person name="Halldorsson B.V."/>
            <person name="Hannenhalli S."/>
            <person name="Turner R."/>
            <person name="Yooseph S."/>
            <person name="Lu F."/>
            <person name="Nusskern D.R."/>
            <person name="Shue B.C."/>
            <person name="Zheng X.H."/>
            <person name="Zhong F."/>
            <person name="Delcher A.L."/>
            <person name="Huson D.H."/>
            <person name="Kravitz S.A."/>
            <person name="Mouchard L."/>
            <person name="Reinert K."/>
            <person name="Remington K.A."/>
            <person name="Clark A.G."/>
            <person name="Waterman M.S."/>
            <person name="Eichler E.E."/>
            <person name="Adams M.D."/>
            <person name="Hunkapiller M.W."/>
            <person name="Myers E.W."/>
            <person name="Venter J.C."/>
        </authorList>
    </citation>
    <scope>NUCLEOTIDE SEQUENCE [LARGE SCALE GENOMIC DNA]</scope>
</reference>
<reference evidence="8" key="3">
    <citation type="journal article" date="2004" name="Genome Res.">
        <title>The status, quality, and expansion of the NIH full-length cDNA project: the Mammalian Gene Collection (MGC).</title>
        <authorList>
            <consortium name="The MGC Project Team"/>
        </authorList>
    </citation>
    <scope>NUCLEOTIDE SEQUENCE [LARGE SCALE MRNA] (ISOFORM 3)</scope>
    <scope>NUCLEOTIDE SEQUENCE [LARGE SCALE MRNA] OF 21-661 (ISOFORM 5)</scope>
    <source>
        <tissue>Placenta</tissue>
    </source>
</reference>
<reference evidence="8" key="4">
    <citation type="journal article" date="1999" name="J. Cell Biol.">
        <title>Aczonin, a 550-kd putative scaffolding protein of presynaptic active zones, shares homology regions with rim and bassoon and binds profilin.</title>
        <authorList>
            <person name="Wang X."/>
            <person name="Kibschull M."/>
            <person name="Laue M.M."/>
            <person name="Lichte B."/>
            <person name="Petrasch-Parwez E."/>
            <person name="Kilimann M.W."/>
        </authorList>
    </citation>
    <scope>NUCLEOTIDE SEQUENCE [MRNA] OF 37-849 (ISOFORM 5)</scope>
    <source>
        <tissue>Brain</tissue>
    </source>
</reference>
<reference evidence="8" key="5">
    <citation type="journal article" date="1998" name="DNA Res.">
        <title>Prediction of the coding sequences of unidentified human genes. IX. The complete sequences of 100 new cDNA clones from brain which can code for large proteins in vitro.</title>
        <authorList>
            <person name="Nagase T."/>
            <person name="Ishikawa K."/>
            <person name="Miyajima N."/>
            <person name="Tanaka A."/>
            <person name="Kotani H."/>
            <person name="Nomura N."/>
            <person name="Ohara O."/>
        </authorList>
    </citation>
    <scope>NUCLEOTIDE SEQUENCE [LARGE SCALE MRNA] OF 3724-5142 (ISOFORM 6)</scope>
    <source>
        <tissue>Brain</tissue>
    </source>
</reference>
<reference key="6">
    <citation type="journal article" date="2015" name="Neurology">
        <title>Loss of PCLO function underlies pontocerebellar hypoplasia type III.</title>
        <authorList>
            <person name="Ahmed M.Y."/>
            <person name="Chioza B.A."/>
            <person name="Rajab A."/>
            <person name="Schmitz-Abe K."/>
            <person name="Al-Khayat A."/>
            <person name="Al-Turki S."/>
            <person name="Baple E.L."/>
            <person name="Patton M.A."/>
            <person name="Al-Memar A.Y."/>
            <person name="Hurles M.E."/>
            <person name="Partlow J.N."/>
            <person name="Hill R.S."/>
            <person name="Evrony G.D."/>
            <person name="Servattalab S."/>
            <person name="Markianos K."/>
            <person name="Walsh C.A."/>
            <person name="Crosby A.H."/>
            <person name="Mochida G.H."/>
        </authorList>
    </citation>
    <scope>TISSUE SPECIFICITY</scope>
    <scope>INVOLVEMENT IN PCH3</scope>
</reference>
<reference key="7">
    <citation type="submission" date="2004-01" db="PDB data bank">
        <title>Solution structure of RSGI RUH-003, a PDZ domain of hypothetical KIAA0559 protein from human.</title>
        <authorList>
            <consortium name="RIKEN structural genomics initiative (RSGI)"/>
        </authorList>
    </citation>
    <scope>STRUCTURE BY NMR OF 4459-4592</scope>
</reference>
<protein>
    <recommendedName>
        <fullName>Protein piccolo</fullName>
    </recommendedName>
    <alternativeName>
        <fullName>Aczonin</fullName>
    </alternativeName>
</protein>
<name>PCLO_HUMAN</name>
<keyword id="KW-0002">3D-structure</keyword>
<keyword id="KW-0025">Alternative splicing</keyword>
<keyword id="KW-0106">Calcium</keyword>
<keyword id="KW-0111">Calcium/phospholipid-binding</keyword>
<keyword id="KW-0966">Cell projection</keyword>
<keyword id="KW-0479">Metal-binding</keyword>
<keyword id="KW-0523">Neurodegeneration</keyword>
<keyword id="KW-0597">Phosphoprotein</keyword>
<keyword id="KW-1267">Proteomics identification</keyword>
<keyword id="KW-1185">Reference proteome</keyword>
<keyword id="KW-0677">Repeat</keyword>
<keyword id="KW-0770">Synapse</keyword>
<keyword id="KW-0862">Zinc</keyword>
<keyword id="KW-0863">Zinc-finger</keyword>
<sequence>MGNEASLEGEGLPEGLAAAAAAGGGASGAGSPSHTAIPAGMEADLSQLSEEERRQIAAVMSRAQGLPKGSVPPAAAESPSMHRKQELDSSHPPKQSGRPPDPGRPAQPGLSKSRTTDTFRSEQKLPGRSPSTISLKESKSRTDLKEEHKSSMMPGFLSEVNALSAVSSVVNKFNPFDLISDSEASQEETTKKQKVVQKEQGKPEGIIKPPLQQQPPKPIPKQQGPGRDPLQQDGTPKSISSQQPEKIKSQPPGTGKPIQGPTQTPQTDHAKLPLQRDASRPQTKQADIVRGESVKPSLPSPSKPPIQQPTPGKPPAQQPGHEKSQPGPAKPPAQPSGLTKPLAQQPGTVKPPVQPPGTTKPPAQPLGPAKPPAQQTGSEKPSSEQPGPKALAQPPGVGKTPAQQPGPAKPPTQQVGTPKPLAQQPGLQSPAKAPGPTKTPVQQPGPGKIPAQQAGPGKTSAQQTGPTKPPSQLPGPAKPPPQQPGPAKPPPQQPGSAKPPSQQPGSTKPPPQQPGPAKPSPQQPGSTKPPSQQPGSAKPSAQQPSPAKPSAQQSTKPVSQTGSGKPLQPPTVSPSAKQPPSQGLPKTICPLCNTTELLLHVPEKANFNTCTECQTTVCSLCGFNPNPHLTEVKEWLCLNCQMKRALGGDLAPVPSSPQPKLKTAPVTTTSAVSKSSPQPQQTSPKKDAAPKQDLSKAPEPKKPPPLVKQPTLHGSPSAKAKQPPEADSLSKPAPPKEPSVPSEQDKAPVADDKPKQPKMVKPTTDLVSSSSATTKPDIPSSKVQSQAEEKTTPPLKTDSAKPSQSFPPTGEKVSPFDSKAIPRPASDSKIISHPGPSSESKGQKQVDPVQKKEEPKKAQTKMSPKPDAKPMPKGSPTPPGPRPTAGQTVPTPQQSPKPQEQSRRFSLNLGSITDAPKSQPTTPQETVTGKLFGFGASIFSQASNLISTAGQPGPHSQSGPGAPMKQAPAPSQPPTSQGPPKSTGQAPPAPAKSIPVKKETKAPAAEKLEPKAEQAPTVKRTETEKKPPPIKDSKSLTAEPQKAVLPTKLEKSPKPESTCPLCKTELNIGSKDPPNFNTCTECKNQVCNLCGFNPTPHLTEIQEWLCLNCQTQRAISGQLGDIRKMPPAPSGPKASPMPVPTESSSQKTAVPPQVKLVKKQEQEVKTEAEKVILEKVKETLSMEKIPPMVTTDQKQEESKLEKDKASALQEKKPLPEEKKLIPEEEKIRSEEKKPLLEEKKPTPEDKKLLPEAKTSAPEEQKHDLLKSQVQIAEEKLEGRVAPKTVQEGKQPQTKMEGLPSGTPQSLPKEDDKTTKTIKEQPQPPCTAKPDQVEPGKEKTEKEDDKSDTSSSQQPKSPQGLSDTGYSSDGISSSLGEIPSLIPTDEKDILKGLKKDSFSQESSPSSPSDLAKLESTVLSILEAQASTLADEKSEKKTQPHEVSPEQPKDQEKTQSLSETLEITISEEEIKESQEERKDTFKKDSQQDIPSSKDHKEKSEFVDDITTRREPYDSVEESSESENSPVPQRKRRTSVGSSSSDEYKQEDSQGSGEEEDFIRKQIIEMSADEDASGSEDDEFIRNQLKEISSSTESQKKEETKGKGKITAGKHRRLTRKSSTSIDEDAGRRHSWHDEDDEAFDESPELKYRETKSQESEELVVTGGGGLRRFKTIELNSTIADKYSAESSQKKTSLYFDEEPELEMESLTDSPEDRSRGEGSSSLHASSFTPGTSPTSVSSLDEDSDSSPSHKKGESKQQRKARHRPHGPLLPTIEDSSEEEELREEEELLKEQEKQREIEQQQRKSSSKKSKKDKDELRAQRRRERPKTPPSNLSPIEDASPTEELRQAAEMEELHRSSCSEYSPSIESDPEGFEISPEKIIEVQKVYKLPTAVSLYSPTDEQSIMQKEGSQKALKSAEEMYEEMMHKTHKYKAFPAANERDEVFEKEPLYGGMLIEDYIYESLVEDTYNGSVDGSLLTRQEEENGFMQQKGREQKIRLSEQIYEDPMQKITDLQKEFYELESLHSVVPQEDIVSSSFIIPESHEIVDLGTMVTSTEEERKLLDADAAYEELMKRQQMQLTPGSSPTQAPIGEDMTESTMDFDRMPDASLTSSVLSGASLTDSTSSATLSIPDVKITQHFSTEEIEDEYVTDYTREIQEIIAHESLILTYSEPSESATSVPPSDTPSLTSSVSSVCTTDSSSPITTLDSITTVYTEPVDMITKFEDSEEISSSTYFPGSIIDYPEEISVSLDRTAPPDGRASADHIVISLSDMASSIIESVVPKPEGPVADTVSTDLLISEKDPVKKAKKETGNGIILEVLEAYRDKKELEAERTKSSLSETVFDHPPSSVIALPMKEQLSTTYFTSGETFGQEKPASQLPSGSPSVSSLPAKPRPFFRSSSLDISAQPPPPPPPPPPPPPPPPPPPPPPLPPPTSPKPTILPKKKLTVASPVTTATPLFDAVTTLETTAVLRSNGLPVTRICTTAPPPVPPKPSSIPSGLVFTHRPEPSKPPIAPKPVIPQLPTTTQKPTDIHPKPTGLSLTSSMTLNLVTSADYKLPSPTSPLSPHSNKSSPRFSKSLTETYVVITLPSEPGTPTDSSASQAITSWPLGSPSKDLVSVEPVFSVVPPVTAVEIPISSEQTFYISGALQTFSATPVTAPSSFQAAPTSVTQFLTTEVSKTEVSATRSTAPSVGLSSISITIPPEPLALDNIHLEKPQYKEDGKLQLVGDVIDLRTVPKVEVKTTDKCIDLSASTMDVKRQITANEVYGKQISAVQPSIINLSVTSSIVTPVSLATETVTFVTCTASASYTTGTESLVGAEHAMTTPLQLTTSKHAEPPYRIPSDQVFPIAREEAPINLSLGTPAHAVTLAITKPVTVPPVGVTNGWTDSTVSQGITDGEVVDLSTTKSHRTVVTMDESTSSVMTKIIEDEKPVDLTAGRRAVCCDVVYKLPFGRSCTAQQPATTLPEDRFGYRDDHYQYDRSGPYGYRGIGGMKPSMSDTNLAEAGHFFYKSKNAFDYSEGTDTAVDLTSGRVTTGEVMDYSSKTTGPYPETRQVISGAGISTPQYSTARMTPPPGPQYCVGSVLRSSNGVVYSSVATPTPSTFAITTQPGSIFSTTVRDLSGIHTADAVTSLPAMHHSQPMPRSYFITTGASETDIAVTGIDISASLQTITMESLTAETIDSVPTLTTASEVFPEVVGDESALLIVPEEDKQQQQLDLERELLELEKIKQQRFAEELEWERQEIQRFREQEKIMVQKKLEELQSMKQHLLFQQEEERQAQFMMRQETLAQQQLQLEQIQQLQQQLHQQLEEQKIRQIYQYNYDPSGTASPQTTTEQAILEGQYAALEGSQFWATEDATTTASAVVAIEIPQSQGWYTVQSDGVTQYIAPPGILSTVSEIPLTDVVVKEEKQPKKRSSGAKVRGQYDDMGENMTDDPRSFKKIVDSGVQTDDEDATDRSYVSRRRRTKKSVDTSVQTDDEDQDEWDMPTRSRRKARVGKYGDSMTEADKTKPLSKVSSIAVQTVAEISVQTEPVGTIRTPSIRARVDAKVEIIKHISAPEKTYKGGSLGCQTEADSDTQSPQYLSATSPPKDKKRPTPLEIGYSSHLRADSTVQLAPSPPKSPKVLYSPISPLSPGKALESAFVPYEKPLPDDISPQKVLHPDMAKVPPASPKTAKMMQRSMSDPKPLSPTADESSRAPFQYTEGYTTKGSQTMTSSGAQKKVKRTLPNPPPEEISTGTQSTFSTMGTVSRRRICRTNTMARAKILQDIDRELDLVERESAKLRKKQAELDEEEKEIDAKLRYLEMGINRRKEALLKEREKRERAYLQGVAEDRDYMSDSEVSSTRPTRIESQHGIERPRTAPQTEFSQFIPPQTQTESQLVPPTSPYTQYQYSSPALPTQAPTSYTQQSHFEQQTLYHQQVSPYQTQPTFQAVATMSFTPQVQPTPTPQPSYQLPSQMMVIQQKPRQTTLYLEPKITSNYEVIRNQPLMIAPVSTDNTFAVSHLGSKYNSLDLRIGLEERSSMASSPISSISADSFYADIDHHTPRNYVLIDDIGEITKGTAALSTAFSLHEKDLSKTDRLLRTTETRRSQEVTDFLAPLQSSSRLHSYVKAEEDPMEDPYELKLLKHQIKQEFRRGTESLDHLAGLSHYYHADTSYRHFPKSEKYSISRLTLEKQAAKQLPAAILYQKQSKHKKSLIDPKMSKFSPIQESRDLEPDYSSYMTSSTSSIGGISSRARLLQDDITFGLRKNITDQQKFMGSSLGTGLGTLGNTIRSALQDEADKPYSSGSRSRPSSRPSSVYGLDLSIKRDSSSSSLRLKAQEAEALDVSFSHASSSARTKPTSLPISQSRGRIPIVAQNSEEESPLSPVGQPMGMARAAAGPLPPISADTRDQFGSSHSLPEVQQHMREESRTRGYDRDIAFIMDDFQHAMSDSEAYHLRREETDWFDKPRESRLENGHGLDRKLPERLVHSRPLSQHQEQIIQMNGKTMHYIFPHARIKITRDSKDHTVSGNGLGIRIVGGKEIPGHSGEIGAYIAKILPGGSAEQTGKLMEGMQVLEWNGIPLTSKTYEEVQSIISQQSGEAEICVRLDLNMLSDSENSQHLELHEPPKAVDKAKSPGVDPKQLAAELQKVSLQQSPLVLSSVVEKGSHVHSGPTSAGSSSVPSPGQPGSPSVSKKKHGSSKPTDGTKVVSHPITGEIQLQINYDLGNLIIHILQARNLVPRDNNGYSDPFVKVYLLPGRGQVMVVQNASAEYKRRTKHVQKSLNPEWNQTVIYKSISMEQLKKKTLEVTVWDYDRFSSNDFLGEVLIDLSSTSHLDNTPRWYPLKEQTESIDHGKSHSSQSSQQSPKPSVIKSRSHGIFPDPSKDMQVPTIEKSHSSPGSSKSSSEGHLRSHGPSRSQSKTSVTQTHLEDAGAAIAAAEAAVQQLRIQPTKPPNHRPAESSVSTGSSGSSFGSGYSVDSEGSSSTAGETNLFPIPRIGKMGQNGQEPVKQPGVGVGLADTEAKTQVMGEIKIALKKEMKTDGEQLIVEILQCRNITYKFKSPDHLPDLYVKIYVMNISTQKKVIKKKTRVCRHDREPSFNETFRFSLSPAGHSLQILLFSNGGKFMKKTLIGEACIWLDKVDLRKRIVNWHKLLVSPTQTH</sequence>
<feature type="chain" id="PRO_0000058250" description="Protein piccolo">
    <location>
        <begin position="1"/>
        <end position="5142"/>
    </location>
</feature>
<feature type="domain" description="PDZ">
    <location>
        <begin position="4496"/>
        <end position="4590"/>
    </location>
</feature>
<feature type="domain" description="C2 1" evidence="4">
    <location>
        <begin position="4694"/>
        <end position="4823"/>
    </location>
</feature>
<feature type="domain" description="C2 2" evidence="4">
    <location>
        <begin position="5007"/>
        <end position="5132"/>
    </location>
</feature>
<feature type="zinc finger region" description="C4-type" evidence="3">
    <location>
        <begin position="589"/>
        <end position="613"/>
    </location>
</feature>
<feature type="zinc finger region" description="C4-type" evidence="3">
    <location>
        <begin position="1059"/>
        <end position="1082"/>
    </location>
</feature>
<feature type="region of interest" description="Disordered" evidence="5">
    <location>
        <begin position="1"/>
        <end position="154"/>
    </location>
</feature>
<feature type="region of interest" description="Disordered" evidence="5">
    <location>
        <begin position="177"/>
        <end position="583"/>
    </location>
</feature>
<feature type="region of interest" description="10 X 10 AA tandem approximate repeats of P-A-K-P-Q-P-Q-Q-P-X">
    <location>
        <begin position="397"/>
        <end position="555"/>
    </location>
</feature>
<feature type="region of interest" description="Disordered" evidence="5">
    <location>
        <begin position="650"/>
        <end position="929"/>
    </location>
</feature>
<feature type="region of interest" description="Disordered" evidence="5">
    <location>
        <begin position="945"/>
        <end position="1058"/>
    </location>
</feature>
<feature type="region of interest" description="Disordered" evidence="5">
    <location>
        <begin position="1120"/>
        <end position="1163"/>
    </location>
</feature>
<feature type="region of interest" description="Disordered" evidence="5">
    <location>
        <begin position="1183"/>
        <end position="1386"/>
    </location>
</feature>
<feature type="region of interest" description="Disordered" evidence="5">
    <location>
        <begin position="1391"/>
        <end position="1410"/>
    </location>
</feature>
<feature type="region of interest" description="Disordered" evidence="5">
    <location>
        <begin position="1423"/>
        <end position="1868"/>
    </location>
</feature>
<feature type="region of interest" description="Disordered" evidence="5">
    <location>
        <begin position="2169"/>
        <end position="2192"/>
    </location>
</feature>
<feature type="region of interest" description="Disordered" evidence="5">
    <location>
        <begin position="2365"/>
        <end position="2438"/>
    </location>
</feature>
<feature type="region of interest" description="Disordered" evidence="5">
    <location>
        <begin position="2504"/>
        <end position="2536"/>
    </location>
</feature>
<feature type="region of interest" description="Disordered" evidence="5">
    <location>
        <begin position="3407"/>
        <end position="3508"/>
    </location>
</feature>
<feature type="region of interest" description="Disordered" evidence="5">
    <location>
        <begin position="3558"/>
        <end position="3626"/>
    </location>
</feature>
<feature type="region of interest" description="Disordered" evidence="5">
    <location>
        <begin position="3652"/>
        <end position="3746"/>
    </location>
</feature>
<feature type="region of interest" description="Disordered" evidence="5">
    <location>
        <begin position="3833"/>
        <end position="3908"/>
    </location>
</feature>
<feature type="region of interest" description="Disordered" evidence="5">
    <location>
        <begin position="4278"/>
        <end position="4301"/>
    </location>
</feature>
<feature type="region of interest" description="Disordered" evidence="5">
    <location>
        <begin position="4389"/>
        <end position="4411"/>
    </location>
</feature>
<feature type="region of interest" description="Disordered" evidence="5">
    <location>
        <begin position="4597"/>
        <end position="4618"/>
    </location>
</feature>
<feature type="region of interest" description="Disordered" evidence="5">
    <location>
        <begin position="4645"/>
        <end position="4690"/>
    </location>
</feature>
<feature type="region of interest" description="Disordered" evidence="5">
    <location>
        <begin position="4830"/>
        <end position="4907"/>
    </location>
</feature>
<feature type="region of interest" description="Disordered" evidence="5">
    <location>
        <begin position="4930"/>
        <end position="4986"/>
    </location>
</feature>
<feature type="compositionally biased region" description="Low complexity" evidence="5">
    <location>
        <begin position="1"/>
        <end position="21"/>
    </location>
</feature>
<feature type="compositionally biased region" description="Basic and acidic residues" evidence="5">
    <location>
        <begin position="114"/>
        <end position="125"/>
    </location>
</feature>
<feature type="compositionally biased region" description="Basic and acidic residues" evidence="5">
    <location>
        <begin position="136"/>
        <end position="150"/>
    </location>
</feature>
<feature type="compositionally biased region" description="Basic and acidic residues" evidence="5">
    <location>
        <begin position="188"/>
        <end position="202"/>
    </location>
</feature>
<feature type="compositionally biased region" description="Polar residues" evidence="5">
    <location>
        <begin position="232"/>
        <end position="244"/>
    </location>
</feature>
<feature type="compositionally biased region" description="Pro residues" evidence="5">
    <location>
        <begin position="298"/>
        <end position="317"/>
    </location>
</feature>
<feature type="compositionally biased region" description="Pro residues" evidence="5">
    <location>
        <begin position="352"/>
        <end position="371"/>
    </location>
</feature>
<feature type="compositionally biased region" description="Polar residues" evidence="5">
    <location>
        <begin position="376"/>
        <end position="385"/>
    </location>
</feature>
<feature type="compositionally biased region" description="Pro residues" evidence="5">
    <location>
        <begin position="467"/>
        <end position="493"/>
    </location>
</feature>
<feature type="compositionally biased region" description="Low complexity" evidence="5">
    <location>
        <begin position="494"/>
        <end position="506"/>
    </location>
</feature>
<feature type="compositionally biased region" description="Pro residues" evidence="5">
    <location>
        <begin position="507"/>
        <end position="522"/>
    </location>
</feature>
<feature type="compositionally biased region" description="Low complexity" evidence="5">
    <location>
        <begin position="523"/>
        <end position="554"/>
    </location>
</feature>
<feature type="compositionally biased region" description="Low complexity" evidence="5">
    <location>
        <begin position="673"/>
        <end position="683"/>
    </location>
</feature>
<feature type="compositionally biased region" description="Basic and acidic residues" evidence="5">
    <location>
        <begin position="684"/>
        <end position="702"/>
    </location>
</feature>
<feature type="compositionally biased region" description="Basic and acidic residues" evidence="5">
    <location>
        <begin position="743"/>
        <end position="755"/>
    </location>
</feature>
<feature type="compositionally biased region" description="Polar residues" evidence="5">
    <location>
        <begin position="765"/>
        <end position="774"/>
    </location>
</feature>
<feature type="compositionally biased region" description="Basic and acidic residues" evidence="5">
    <location>
        <begin position="841"/>
        <end position="857"/>
    </location>
</feature>
<feature type="compositionally biased region" description="Pro residues" evidence="5">
    <location>
        <begin position="873"/>
        <end position="882"/>
    </location>
</feature>
<feature type="compositionally biased region" description="Polar residues" evidence="5">
    <location>
        <begin position="889"/>
        <end position="927"/>
    </location>
</feature>
<feature type="compositionally biased region" description="Low complexity" evidence="5">
    <location>
        <begin position="949"/>
        <end position="969"/>
    </location>
</feature>
<feature type="compositionally biased region" description="Basic and acidic residues" evidence="5">
    <location>
        <begin position="996"/>
        <end position="1012"/>
    </location>
</feature>
<feature type="compositionally biased region" description="Basic and acidic residues" evidence="5">
    <location>
        <begin position="1019"/>
        <end position="1034"/>
    </location>
</feature>
<feature type="compositionally biased region" description="Pro residues" evidence="5">
    <location>
        <begin position="1126"/>
        <end position="1139"/>
    </location>
</feature>
<feature type="compositionally biased region" description="Basic and acidic residues" evidence="5">
    <location>
        <begin position="1193"/>
        <end position="1265"/>
    </location>
</feature>
<feature type="compositionally biased region" description="Basic and acidic residues" evidence="5">
    <location>
        <begin position="1307"/>
        <end position="1318"/>
    </location>
</feature>
<feature type="compositionally biased region" description="Basic and acidic residues" evidence="5">
    <location>
        <begin position="1330"/>
        <end position="1347"/>
    </location>
</feature>
<feature type="compositionally biased region" description="Low complexity" evidence="5">
    <location>
        <begin position="1348"/>
        <end position="1358"/>
    </location>
</feature>
<feature type="compositionally biased region" description="Polar residues" evidence="5">
    <location>
        <begin position="1359"/>
        <end position="1374"/>
    </location>
</feature>
<feature type="compositionally biased region" description="Low complexity" evidence="5">
    <location>
        <begin position="1398"/>
        <end position="1407"/>
    </location>
</feature>
<feature type="compositionally biased region" description="Basic and acidic residues" evidence="5">
    <location>
        <begin position="1428"/>
        <end position="1451"/>
    </location>
</feature>
<feature type="compositionally biased region" description="Basic and acidic residues" evidence="5">
    <location>
        <begin position="1469"/>
        <end position="1510"/>
    </location>
</feature>
<feature type="compositionally biased region" description="Acidic residues" evidence="5">
    <location>
        <begin position="1564"/>
        <end position="1576"/>
    </location>
</feature>
<feature type="compositionally biased region" description="Acidic residues" evidence="5">
    <location>
        <begin position="1631"/>
        <end position="1640"/>
    </location>
</feature>
<feature type="compositionally biased region" description="Basic and acidic residues" evidence="5">
    <location>
        <begin position="1641"/>
        <end position="1652"/>
    </location>
</feature>
<feature type="compositionally biased region" description="Polar residues" evidence="5">
    <location>
        <begin position="1671"/>
        <end position="1689"/>
    </location>
</feature>
<feature type="compositionally biased region" description="Acidic residues" evidence="5">
    <location>
        <begin position="1693"/>
        <end position="1703"/>
    </location>
</feature>
<feature type="compositionally biased region" description="Polar residues" evidence="5">
    <location>
        <begin position="1715"/>
        <end position="1732"/>
    </location>
</feature>
<feature type="compositionally biased region" description="Acidic residues" evidence="5">
    <location>
        <begin position="1772"/>
        <end position="1785"/>
    </location>
</feature>
<feature type="compositionally biased region" description="Basic and acidic residues" evidence="5">
    <location>
        <begin position="1786"/>
        <end position="1799"/>
    </location>
</feature>
<feature type="compositionally biased region" description="Basic and acidic residues" evidence="5">
    <location>
        <begin position="1840"/>
        <end position="1855"/>
    </location>
</feature>
<feature type="compositionally biased region" description="Low complexity" evidence="5">
    <location>
        <begin position="2174"/>
        <end position="2192"/>
    </location>
</feature>
<feature type="compositionally biased region" description="Low complexity" evidence="5">
    <location>
        <begin position="2374"/>
        <end position="2387"/>
    </location>
</feature>
<feature type="compositionally biased region" description="Pro residues" evidence="5">
    <location>
        <begin position="2404"/>
        <end position="2433"/>
    </location>
</feature>
<feature type="compositionally biased region" description="Pro residues" evidence="5">
    <location>
        <begin position="2506"/>
        <end position="2517"/>
    </location>
</feature>
<feature type="compositionally biased region" description="Basic and acidic residues" evidence="5">
    <location>
        <begin position="3432"/>
        <end position="3441"/>
    </location>
</feature>
<feature type="compositionally biased region" description="Acidic residues" evidence="5">
    <location>
        <begin position="3474"/>
        <end position="3483"/>
    </location>
</feature>
<feature type="compositionally biased region" description="Polar residues" evidence="5">
    <location>
        <begin position="3574"/>
        <end position="3585"/>
    </location>
</feature>
<feature type="compositionally biased region" description="Polar residues" evidence="5">
    <location>
        <begin position="3701"/>
        <end position="3716"/>
    </location>
</feature>
<feature type="compositionally biased region" description="Polar residues" evidence="5">
    <location>
        <begin position="3733"/>
        <end position="3745"/>
    </location>
</feature>
<feature type="compositionally biased region" description="Basic and acidic residues" evidence="5">
    <location>
        <begin position="3845"/>
        <end position="3857"/>
    </location>
</feature>
<feature type="compositionally biased region" description="Polar residues" evidence="5">
    <location>
        <begin position="3859"/>
        <end position="3908"/>
    </location>
</feature>
<feature type="compositionally biased region" description="Low complexity" evidence="5">
    <location>
        <begin position="4282"/>
        <end position="4301"/>
    </location>
</feature>
<feature type="compositionally biased region" description="Basic and acidic residues" evidence="5">
    <location>
        <begin position="4598"/>
        <end position="4615"/>
    </location>
</feature>
<feature type="compositionally biased region" description="Low complexity" evidence="5">
    <location>
        <begin position="4652"/>
        <end position="4673"/>
    </location>
</feature>
<feature type="compositionally biased region" description="Low complexity" evidence="5">
    <location>
        <begin position="4838"/>
        <end position="4853"/>
    </location>
</feature>
<feature type="compositionally biased region" description="Low complexity" evidence="5">
    <location>
        <begin position="4877"/>
        <end position="4887"/>
    </location>
</feature>
<feature type="compositionally biased region" description="Polar residues" evidence="5">
    <location>
        <begin position="4895"/>
        <end position="4907"/>
    </location>
</feature>
<feature type="compositionally biased region" description="Low complexity" evidence="5">
    <location>
        <begin position="4941"/>
        <end position="4965"/>
    </location>
</feature>
<feature type="binding site" evidence="4">
    <location>
        <position position="4723"/>
    </location>
    <ligand>
        <name>Ca(2+)</name>
        <dbReference type="ChEBI" id="CHEBI:29108"/>
        <label>1</label>
    </ligand>
</feature>
<feature type="binding site" evidence="4">
    <location>
        <position position="4723"/>
    </location>
    <ligand>
        <name>Ca(2+)</name>
        <dbReference type="ChEBI" id="CHEBI:29108"/>
        <label>2</label>
    </ligand>
</feature>
<feature type="binding site" evidence="4">
    <location>
        <position position="4729"/>
    </location>
    <ligand>
        <name>Ca(2+)</name>
        <dbReference type="ChEBI" id="CHEBI:29108"/>
        <label>1</label>
    </ligand>
</feature>
<feature type="binding site" evidence="4">
    <location>
        <position position="4793"/>
    </location>
    <ligand>
        <name>Ca(2+)</name>
        <dbReference type="ChEBI" id="CHEBI:29108"/>
        <label>1</label>
    </ligand>
</feature>
<feature type="binding site" evidence="4">
    <location>
        <position position="4793"/>
    </location>
    <ligand>
        <name>Ca(2+)</name>
        <dbReference type="ChEBI" id="CHEBI:29108"/>
        <label>2</label>
    </ligand>
</feature>
<feature type="binding site" evidence="4">
    <location>
        <position position="4795"/>
    </location>
    <ligand>
        <name>Ca(2+)</name>
        <dbReference type="ChEBI" id="CHEBI:29108"/>
        <label>1</label>
    </ligand>
</feature>
<feature type="binding site" evidence="4">
    <location>
        <position position="4795"/>
    </location>
    <ligand>
        <name>Ca(2+)</name>
        <dbReference type="ChEBI" id="CHEBI:29108"/>
        <label>2</label>
    </ligand>
</feature>
<feature type="binding site" evidence="4">
    <location>
        <position position="4795"/>
    </location>
    <ligand>
        <name>Ca(2+)</name>
        <dbReference type="ChEBI" id="CHEBI:29108"/>
        <label>3</label>
    </ligand>
</feature>
<feature type="binding site" evidence="4">
    <location>
        <position position="4798"/>
    </location>
    <ligand>
        <name>Ca(2+)</name>
        <dbReference type="ChEBI" id="CHEBI:29108"/>
        <label>3</label>
    </ligand>
</feature>
<feature type="binding site" evidence="4">
    <location>
        <position position="4801"/>
    </location>
    <ligand>
        <name>Ca(2+)</name>
        <dbReference type="ChEBI" id="CHEBI:29108"/>
        <label>2</label>
    </ligand>
</feature>
<feature type="binding site" evidence="4">
    <location>
        <position position="4801"/>
    </location>
    <ligand>
        <name>Ca(2+)</name>
        <dbReference type="ChEBI" id="CHEBI:29108"/>
        <label>3</label>
    </ligand>
</feature>
<feature type="modified residue" description="Phosphoserine" evidence="2">
    <location>
        <position position="906"/>
    </location>
</feature>
<feature type="modified residue" description="Phosphoserine" evidence="2">
    <location>
        <position position="918"/>
    </location>
</feature>
<feature type="modified residue" description="Phosphothreonine" evidence="2">
    <location>
        <position position="922"/>
    </location>
</feature>
<feature type="modified residue" description="Phosphoserine" evidence="2">
    <location>
        <position position="1356"/>
    </location>
</feature>
<feature type="modified residue" description="Phosphoserine" evidence="2">
    <location>
        <position position="1366"/>
    </location>
</feature>
<feature type="modified residue" description="Phosphoserine" evidence="2">
    <location>
        <position position="1367"/>
    </location>
</feature>
<feature type="modified residue" description="Phosphoserine" evidence="2">
    <location>
        <position position="1396"/>
    </location>
</feature>
<feature type="modified residue" description="Phosphoserine" evidence="2">
    <location>
        <position position="1398"/>
    </location>
</feature>
<feature type="modified residue" description="Phosphoserine" evidence="2">
    <location>
        <position position="1401"/>
    </location>
</feature>
<feature type="modified residue" description="Phosphoserine" evidence="2">
    <location>
        <position position="1402"/>
    </location>
</feature>
<feature type="modified residue" description="Phosphoserine" evidence="2">
    <location>
        <position position="1405"/>
    </location>
</feature>
<feature type="modified residue" description="Phosphoserine" evidence="2">
    <location>
        <position position="1516"/>
    </location>
</feature>
<feature type="modified residue" description="Phosphoserine" evidence="2">
    <location>
        <position position="1517"/>
    </location>
</feature>
<feature type="modified residue" description="Phosphoserine" evidence="2">
    <location>
        <position position="1519"/>
    </location>
</feature>
<feature type="modified residue" description="Phosphoserine" evidence="2">
    <location>
        <position position="1522"/>
    </location>
</feature>
<feature type="modified residue" description="Phosphoserine" evidence="2">
    <location>
        <position position="1546"/>
    </location>
</feature>
<feature type="modified residue" description="Phosphoserine" evidence="2">
    <location>
        <position position="1549"/>
    </location>
</feature>
<feature type="modified residue" description="Phosphoserine" evidence="1">
    <location>
        <position position="1570"/>
    </location>
</feature>
<feature type="modified residue" description="Phosphoserine" evidence="1">
    <location>
        <position position="1572"/>
    </location>
</feature>
<feature type="modified residue" description="Phosphothreonine" evidence="2">
    <location>
        <position position="1617"/>
    </location>
</feature>
<feature type="modified residue" description="Phosphoserine" evidence="2">
    <location>
        <position position="1618"/>
    </location>
</feature>
<feature type="modified residue" description="Phosphoserine" evidence="2">
    <location>
        <position position="1628"/>
    </location>
</feature>
<feature type="modified residue" description="Phosphoserine" evidence="2">
    <location>
        <position position="1640"/>
    </location>
</feature>
<feature type="modified residue" description="Phosphoserine" evidence="1">
    <location>
        <position position="1703"/>
    </location>
</feature>
<feature type="modified residue" description="Phosphothreonine" evidence="1">
    <location>
        <position position="1705"/>
    </location>
</feature>
<feature type="modified residue" description="Phosphoserine" evidence="2">
    <location>
        <position position="1707"/>
    </location>
</feature>
<feature type="modified residue" description="Phosphoserine" evidence="2">
    <location>
        <position position="1712"/>
    </location>
</feature>
<feature type="modified residue" description="Phosphoserine" evidence="2">
    <location>
        <position position="1773"/>
    </location>
</feature>
<feature type="modified residue" description="Phosphoserine" evidence="2">
    <location>
        <position position="1774"/>
    </location>
</feature>
<feature type="modified residue" description="Phosphothreonine" evidence="2">
    <location>
        <position position="1825"/>
    </location>
</feature>
<feature type="modified residue" description="Phosphoserine" evidence="2">
    <location>
        <position position="1831"/>
    </location>
</feature>
<feature type="modified residue" description="Phosphoserine" evidence="2">
    <location>
        <position position="1860"/>
    </location>
</feature>
<feature type="modified residue" description="Phosphoserine" evidence="2">
    <location>
        <position position="1865"/>
    </location>
</feature>
<feature type="modified residue" description="Phosphoserine" evidence="2">
    <location>
        <position position="1873"/>
    </location>
</feature>
<feature type="modified residue" description="Phosphoserine" evidence="2">
    <location>
        <position position="1894"/>
    </location>
</feature>
<feature type="modified residue" description="Phosphoserine" evidence="2">
    <location>
        <position position="2562"/>
    </location>
</feature>
<feature type="modified residue" description="Phosphothreonine" evidence="2">
    <location>
        <position position="3069"/>
    </location>
</feature>
<feature type="modified residue" description="Phosphoserine" evidence="2">
    <location>
        <position position="3443"/>
    </location>
</feature>
<feature type="modified residue" description="Phosphothreonine" evidence="2">
    <location>
        <position position="3447"/>
    </location>
</feature>
<feature type="modified residue" description="Phosphothreonine" evidence="2">
    <location>
        <position position="3474"/>
    </location>
</feature>
<feature type="modified residue" description="Phosphoserine" evidence="2">
    <location>
        <position position="3577"/>
    </location>
</feature>
<feature type="modified residue" description="Phosphoserine" evidence="2">
    <location>
        <position position="3585"/>
    </location>
</feature>
<feature type="modified residue" description="Phosphoserine" evidence="2">
    <location>
        <position position="3615"/>
    </location>
</feature>
<feature type="modified residue" description="Phosphoserine" evidence="2">
    <location>
        <position position="3619"/>
    </location>
</feature>
<feature type="modified residue" description="Phosphoserine" evidence="1">
    <location>
        <position position="3625"/>
    </location>
</feature>
<feature type="modified residue" description="Phosphoserine" evidence="2">
    <location>
        <position position="3628"/>
    </location>
</feature>
<feature type="modified residue" description="Phosphoserine" evidence="1">
    <location>
        <position position="3631"/>
    </location>
</feature>
<feature type="modified residue" description="Phosphoserine" evidence="2">
    <location>
        <position position="3652"/>
    </location>
</feature>
<feature type="modified residue" description="Phosphoserine" evidence="1">
    <location>
        <position position="3678"/>
    </location>
</feature>
<feature type="modified residue" description="Phosphoserine" evidence="2">
    <location>
        <position position="3680"/>
    </location>
</feature>
<feature type="modified residue" description="Phosphoserine" evidence="2">
    <location>
        <position position="3686"/>
    </location>
</feature>
<feature type="modified residue" description="Phosphoserine" evidence="1">
    <location>
        <position position="3835"/>
    </location>
</feature>
<feature type="modified residue" description="Phosphoserine" evidence="2">
    <location>
        <position position="4088"/>
    </location>
</feature>
<feature type="modified residue" description="Phosphoserine" evidence="2">
    <location>
        <position position="4204"/>
    </location>
</feature>
<feature type="modified residue" description="Phosphoserine" evidence="2">
    <location>
        <position position="4358"/>
    </location>
</feature>
<feature type="modified residue" description="Phosphoserine" evidence="2">
    <location>
        <position position="4362"/>
    </location>
</feature>
<feature type="modified residue" description="Phosphoserine" evidence="2">
    <location>
        <position position="4365"/>
    </location>
</feature>
<feature type="modified residue" description="Phosphoserine" evidence="1">
    <location>
        <position position="4394"/>
    </location>
</feature>
<feature type="modified residue" description="Phosphoserine" evidence="2">
    <location>
        <position position="4430"/>
    </location>
</feature>
<feature type="modified residue" description="Phosphoserine" evidence="2">
    <location>
        <position position="4664"/>
    </location>
</feature>
<feature type="modified residue" description="Phosphoserine" evidence="1">
    <location>
        <position position="4778"/>
    </location>
</feature>
<feature type="splice variant" id="VSP_059461" description="In isoform 3." evidence="7">
    <location>
        <begin position="1"/>
        <end position="4570"/>
    </location>
</feature>
<feature type="splice variant" id="VSP_059462" description="In isoform 3." evidence="7">
    <original>VQSIISQQSGEAEICVRL</original>
    <variation>MKKFRVSLVSKVGKQKYV</variation>
    <location>
        <begin position="4571"/>
        <end position="4588"/>
    </location>
</feature>
<feature type="splice variant" id="VSP_059463" description="In isoform 3." evidence="7">
    <location>
        <begin position="4742"/>
        <end position="4750"/>
    </location>
</feature>
<feature type="splice variant" id="VSP_059464" description="In isoform 3 and isoform 6." evidence="7">
    <original>TKPPN</original>
    <variation>SKRRK</variation>
    <location>
        <begin position="4931"/>
        <end position="4935"/>
    </location>
</feature>
<feature type="splice variant" id="VSP_059465" description="In isoform 3 and isoform 6." evidence="7">
    <location>
        <begin position="4936"/>
        <end position="5142"/>
    </location>
</feature>
<feature type="sequence variant" id="VAR_056959" description="In dbSNP:rs10261848.">
    <original>T</original>
    <variation>P</variation>
    <location>
        <position position="2671"/>
    </location>
</feature>
<feature type="sequence variant" id="VAR_056960" description="In dbSNP:rs976714.">
    <original>A</original>
    <variation>T</variation>
    <location>
        <position position="2804"/>
    </location>
</feature>
<feature type="sequence conflict" description="In Ref. 4; CAB60727." evidence="8" ref="4">
    <original>V</original>
    <variation>A</variation>
    <location>
        <position position="441"/>
    </location>
</feature>
<feature type="sequence conflict" description="In Ref. 4; CAB60727." evidence="8" ref="4">
    <location>
        <begin position="443"/>
        <end position="496"/>
    </location>
</feature>
<feature type="sequence conflict" description="In Ref. 4; CAB60727." evidence="8" ref="4">
    <original>A</original>
    <variation>T</variation>
    <location>
        <position position="497"/>
    </location>
</feature>
<feature type="sequence conflict" description="In Ref. 3; AAI22566." evidence="8" ref="3">
    <original>S</original>
    <variation>P</variation>
    <location>
        <position position="501"/>
    </location>
</feature>
<feature type="sequence conflict" description="In Ref. 4; CAB60727." evidence="8" ref="4">
    <original>S</original>
    <variation>F</variation>
    <location>
        <position position="554"/>
    </location>
</feature>
<feature type="sequence conflict" description="In Ref. 4; CAB60727." evidence="8" ref="4">
    <original>S</original>
    <variation>F</variation>
    <location>
        <position position="563"/>
    </location>
</feature>
<feature type="sequence conflict" description="In Ref. 4; CAB60727." evidence="8" ref="4">
    <original>V</original>
    <variation>A</variation>
    <location>
        <position position="632"/>
    </location>
</feature>
<feature type="sequence conflict" description="In Ref. 4; CAB60727." evidence="8" ref="4">
    <original>S</original>
    <variation>T</variation>
    <location>
        <position position="814"/>
    </location>
</feature>
<feature type="sequence conflict" description="In Ref. 3; AAH01304." evidence="8" ref="3">
    <original>S</original>
    <variation>A</variation>
    <location>
        <position position="4814"/>
    </location>
</feature>
<feature type="strand" evidence="10">
    <location>
        <begin position="4494"/>
        <end position="4499"/>
    </location>
</feature>
<feature type="strand" evidence="10">
    <location>
        <begin position="4503"/>
        <end position="4506"/>
    </location>
</feature>
<feature type="strand" evidence="10">
    <location>
        <begin position="4514"/>
        <end position="4522"/>
    </location>
</feature>
<feature type="strand" evidence="10">
    <location>
        <begin position="4524"/>
        <end position="4528"/>
    </location>
</feature>
<feature type="strand" evidence="10">
    <location>
        <begin position="4530"/>
        <end position="4537"/>
    </location>
</feature>
<feature type="helix" evidence="10">
    <location>
        <begin position="4542"/>
        <end position="4546"/>
    </location>
</feature>
<feature type="strand" evidence="10">
    <location>
        <begin position="4554"/>
        <end position="4558"/>
    </location>
</feature>
<feature type="helix" evidence="10">
    <location>
        <begin position="4568"/>
        <end position="4575"/>
    </location>
</feature>
<feature type="strand" evidence="10">
    <location>
        <begin position="4582"/>
        <end position="4589"/>
    </location>
</feature>
<proteinExistence type="evidence at protein level"/>
<comment type="function">
    <text evidence="1">Scaffold protein of the presynaptic cytomatrix at the active zone (CAZ) which is the place in the synapse where neurotransmitter is released (By similarity). After synthesis, participates in the formation of Golgi-derived membranous organelles termed Piccolo-Bassoon transport vesicles (PTVs) that are transported along axons to sites of nascent synaptic contacts (By similarity). At the presynaptic active zone, regulates the spatial organization of synaptic vesicle cluster, the protein complexes that execute membrane fusion and compensatory endocytosis (By similarity). Organizes as well the readily releasable pool of synaptic vesicles and safeguards a fraction of them to be not immediately available for action potential-induced release (By similarity). Also functions in processes other than assembly such as the regulation of specific presynaptic protein ubiquitination by interacting with SIAH1 or the regulation of presynaptic autophagy (By similarity). Also mediates synapse to nucleus communication leading to reconfiguration of gene expression by associating with the transcriptional corepressor CTBP1 and by subsequently reducing the size of its pool available for nuclear import (By similarity).</text>
</comment>
<comment type="cofactor">
    <cofactor evidence="4">
        <name>Ca(2+)</name>
        <dbReference type="ChEBI" id="CHEBI:29108"/>
    </cofactor>
    <text evidence="4">Binds 3 Ca(2+) ions per C2 domain.</text>
</comment>
<comment type="subunit">
    <text evidence="1 2">Interacts with BSN, ERC2/CAST1, RIMS1 and UNC13A (By similarity). Interacts (via C-terminus) with TRIO (via N-terminus) (By similarity). Interacts with CTBP1 (By similarity). Interacts with SIAH1; this interaction negatively regulates SIAH1 E3 ligase activity (By similarity). Directly interacts with GIT1 and GIT2 (By similarity).</text>
</comment>
<comment type="subcellular location">
    <subcellularLocation>
        <location evidence="2">Presynaptic active zone</location>
    </subcellularLocation>
    <text evidence="1">Colocalizes with BSN in developing axons.</text>
</comment>
<comment type="alternative products">
    <event type="alternative splicing"/>
    <isoform>
        <id>Q9Y6V0-5</id>
        <name>5</name>
        <sequence type="displayed"/>
    </isoform>
    <isoform>
        <id>Q9Y6V0-3</id>
        <name>3</name>
        <sequence type="described" ref="VSP_059461 VSP_059462 VSP_059463 VSP_059464 VSP_059465"/>
    </isoform>
    <isoform>
        <id>Q9Y6V0-6</id>
        <name>6</name>
        <sequence type="described" ref="VSP_059464 VSP_059465"/>
    </isoform>
    <text>Additional isoforms seem to exist.</text>
</comment>
<comment type="tissue specificity">
    <text evidence="6">Moderately expressed in the developing cerebral cortex.</text>
</comment>
<comment type="domain">
    <text evidence="1">C2 domain 1 is involved in binding calcium and phospholipids. Calcium binds with low affinity but with high specificity and induces a large conformational change.</text>
</comment>
<comment type="disease" evidence="6">
    <disease id="DI-04470">
        <name>Pontocerebellar hypoplasia 3</name>
        <acronym>PCH3</acronym>
        <description>A form of pontocerebellar hypoplasia, a disorder characterized by structural defects of the pons and cerebellum. Brain MRI shows an abnormally small cerebellum and brainstem, decreased cerebral white matter, and a thin corpus callosum. PCH3 features include seizures, short stature, optic atrophy, progressive microcephaly, severe developmental delay.</description>
        <dbReference type="MIM" id="608027"/>
    </disease>
    <text>The disease is caused by variants affecting the gene represented in this entry.</text>
</comment>
<comment type="sequence caution" evidence="8">
    <conflict type="erroneous gene model prediction">
        <sequence resource="EMBL-CDS" id="AAB97937"/>
    </conflict>
</comment>
<comment type="sequence caution" evidence="8">
    <conflict type="erroneous gene model prediction">
        <sequence resource="EMBL-CDS" id="AAD21789"/>
    </conflict>
</comment>
<comment type="sequence caution" evidence="8">
    <conflict type="erroneous gene model prediction">
        <sequence resource="EMBL-CDS" id="EAL24187"/>
    </conflict>
</comment>
<gene>
    <name evidence="2" type="primary">PCLO</name>
    <name evidence="9" type="synonym">ACZ</name>
    <name type="synonym">KIAA0559</name>
</gene>
<accession>Q9Y6V0</accession>
<accession>A4D1A7</accession>
<accession>A6NNX9</accession>
<accession>O43373</accession>
<accession>O60305</accession>
<accession>Q08E72</accession>
<accession>Q9BVC8</accession>
<accession>Q9UIV2</accession>
<accession>Q9Y6U9</accession>
<organism>
    <name type="scientific">Homo sapiens</name>
    <name type="common">Human</name>
    <dbReference type="NCBI Taxonomy" id="9606"/>
    <lineage>
        <taxon>Eukaryota</taxon>
        <taxon>Metazoa</taxon>
        <taxon>Chordata</taxon>
        <taxon>Craniata</taxon>
        <taxon>Vertebrata</taxon>
        <taxon>Euteleostomi</taxon>
        <taxon>Mammalia</taxon>
        <taxon>Eutheria</taxon>
        <taxon>Euarchontoglires</taxon>
        <taxon>Primates</taxon>
        <taxon>Haplorrhini</taxon>
        <taxon>Catarrhini</taxon>
        <taxon>Hominidae</taxon>
        <taxon>Homo</taxon>
    </lineage>
</organism>